<sequence length="144" mass="16374">MPRHHQKKSSASGGGSQRQLRVGEQVRHAMAEILAQGNVHDADLEGHIVTVPEVRMSPDLKLATIYVMPLGGRDTEIVIAALERNKKFLRGEVARRVNLKFAPDVRFRVDERFDEAERIEKLLRTPAVQKDLEQDPDSDREEEQ</sequence>
<keyword id="KW-0963">Cytoplasm</keyword>
<keyword id="KW-1185">Reference proteome</keyword>
<keyword id="KW-0690">Ribosome biogenesis</keyword>
<evidence type="ECO:0000255" key="1">
    <source>
        <dbReference type="HAMAP-Rule" id="MF_00003"/>
    </source>
</evidence>
<evidence type="ECO:0000256" key="2">
    <source>
        <dbReference type="SAM" id="MobiDB-lite"/>
    </source>
</evidence>
<feature type="chain" id="PRO_0000102631" description="Ribosome-binding factor A">
    <location>
        <begin position="1"/>
        <end position="144"/>
    </location>
</feature>
<feature type="region of interest" description="Disordered" evidence="2">
    <location>
        <begin position="1"/>
        <end position="22"/>
    </location>
</feature>
<feature type="region of interest" description="Disordered" evidence="2">
    <location>
        <begin position="125"/>
        <end position="144"/>
    </location>
</feature>
<feature type="compositionally biased region" description="Acidic residues" evidence="2">
    <location>
        <begin position="134"/>
        <end position="144"/>
    </location>
</feature>
<gene>
    <name evidence="1" type="primary">rbfA</name>
    <name type="ordered locus">bll0782</name>
</gene>
<protein>
    <recommendedName>
        <fullName evidence="1">Ribosome-binding factor A</fullName>
    </recommendedName>
</protein>
<organism>
    <name type="scientific">Bradyrhizobium diazoefficiens (strain JCM 10833 / BCRC 13528 / IAM 13628 / NBRC 14792 / USDA 110)</name>
    <dbReference type="NCBI Taxonomy" id="224911"/>
    <lineage>
        <taxon>Bacteria</taxon>
        <taxon>Pseudomonadati</taxon>
        <taxon>Pseudomonadota</taxon>
        <taxon>Alphaproteobacteria</taxon>
        <taxon>Hyphomicrobiales</taxon>
        <taxon>Nitrobacteraceae</taxon>
        <taxon>Bradyrhizobium</taxon>
    </lineage>
</organism>
<reference key="1">
    <citation type="journal article" date="2002" name="DNA Res.">
        <title>Complete genomic sequence of nitrogen-fixing symbiotic bacterium Bradyrhizobium japonicum USDA110.</title>
        <authorList>
            <person name="Kaneko T."/>
            <person name="Nakamura Y."/>
            <person name="Sato S."/>
            <person name="Minamisawa K."/>
            <person name="Uchiumi T."/>
            <person name="Sasamoto S."/>
            <person name="Watanabe A."/>
            <person name="Idesawa K."/>
            <person name="Iriguchi M."/>
            <person name="Kawashima K."/>
            <person name="Kohara M."/>
            <person name="Matsumoto M."/>
            <person name="Shimpo S."/>
            <person name="Tsuruoka H."/>
            <person name="Wada T."/>
            <person name="Yamada M."/>
            <person name="Tabata S."/>
        </authorList>
    </citation>
    <scope>NUCLEOTIDE SEQUENCE [LARGE SCALE GENOMIC DNA]</scope>
    <source>
        <strain>JCM 10833 / BCRC 13528 / IAM 13628 / NBRC 14792 / USDA 110</strain>
    </source>
</reference>
<proteinExistence type="inferred from homology"/>
<comment type="function">
    <text evidence="1">One of several proteins that assist in the late maturation steps of the functional core of the 30S ribosomal subunit. Associates with free 30S ribosomal subunits (but not with 30S subunits that are part of 70S ribosomes or polysomes). Required for efficient processing of 16S rRNA. May interact with the 5'-terminal helix region of 16S rRNA.</text>
</comment>
<comment type="subunit">
    <text evidence="1">Monomer. Binds 30S ribosomal subunits, but not 50S ribosomal subunits or 70S ribosomes.</text>
</comment>
<comment type="subcellular location">
    <subcellularLocation>
        <location evidence="1">Cytoplasm</location>
    </subcellularLocation>
</comment>
<comment type="similarity">
    <text evidence="1">Belongs to the RbfA family.</text>
</comment>
<dbReference type="EMBL" id="BA000040">
    <property type="protein sequence ID" value="BAC46047.1"/>
    <property type="molecule type" value="Genomic_DNA"/>
</dbReference>
<dbReference type="RefSeq" id="NP_767422.1">
    <property type="nucleotide sequence ID" value="NC_004463.1"/>
</dbReference>
<dbReference type="RefSeq" id="WP_011083604.1">
    <property type="nucleotide sequence ID" value="NC_004463.1"/>
</dbReference>
<dbReference type="SMR" id="Q89WB0"/>
<dbReference type="STRING" id="224911.AAV28_00760"/>
<dbReference type="EnsemblBacteria" id="BAC46047">
    <property type="protein sequence ID" value="BAC46047"/>
    <property type="gene ID" value="BAC46047"/>
</dbReference>
<dbReference type="GeneID" id="46488058"/>
<dbReference type="KEGG" id="bja:bll0782"/>
<dbReference type="PATRIC" id="fig|224911.44.peg.157"/>
<dbReference type="eggNOG" id="COG0858">
    <property type="taxonomic scope" value="Bacteria"/>
</dbReference>
<dbReference type="HOGENOM" id="CLU_089475_1_0_5"/>
<dbReference type="InParanoid" id="Q89WB0"/>
<dbReference type="OrthoDB" id="9805051at2"/>
<dbReference type="PhylomeDB" id="Q89WB0"/>
<dbReference type="Proteomes" id="UP000002526">
    <property type="component" value="Chromosome"/>
</dbReference>
<dbReference type="GO" id="GO:0005829">
    <property type="term" value="C:cytosol"/>
    <property type="evidence" value="ECO:0000318"/>
    <property type="project" value="GO_Central"/>
</dbReference>
<dbReference type="GO" id="GO:0043024">
    <property type="term" value="F:ribosomal small subunit binding"/>
    <property type="evidence" value="ECO:0000318"/>
    <property type="project" value="GO_Central"/>
</dbReference>
<dbReference type="GO" id="GO:0030490">
    <property type="term" value="P:maturation of SSU-rRNA"/>
    <property type="evidence" value="ECO:0007669"/>
    <property type="project" value="UniProtKB-UniRule"/>
</dbReference>
<dbReference type="GO" id="GO:0042254">
    <property type="term" value="P:ribosome biogenesis"/>
    <property type="evidence" value="ECO:0000318"/>
    <property type="project" value="GO_Central"/>
</dbReference>
<dbReference type="FunFam" id="3.30.300.20:FF:000047">
    <property type="entry name" value="Ribosome-binding factor A"/>
    <property type="match status" value="1"/>
</dbReference>
<dbReference type="Gene3D" id="3.30.300.20">
    <property type="match status" value="1"/>
</dbReference>
<dbReference type="HAMAP" id="MF_00003">
    <property type="entry name" value="RbfA"/>
    <property type="match status" value="1"/>
</dbReference>
<dbReference type="InterPro" id="IPR015946">
    <property type="entry name" value="KH_dom-like_a/b"/>
</dbReference>
<dbReference type="InterPro" id="IPR000238">
    <property type="entry name" value="RbfA"/>
</dbReference>
<dbReference type="InterPro" id="IPR023799">
    <property type="entry name" value="RbfA_dom_sf"/>
</dbReference>
<dbReference type="InterPro" id="IPR020053">
    <property type="entry name" value="Ribosome-bd_factorA_CS"/>
</dbReference>
<dbReference type="NCBIfam" id="NF001802">
    <property type="entry name" value="PRK00521.2-5"/>
    <property type="match status" value="1"/>
</dbReference>
<dbReference type="NCBIfam" id="TIGR00082">
    <property type="entry name" value="rbfA"/>
    <property type="match status" value="1"/>
</dbReference>
<dbReference type="PANTHER" id="PTHR33515">
    <property type="entry name" value="RIBOSOME-BINDING FACTOR A, CHLOROPLASTIC-RELATED"/>
    <property type="match status" value="1"/>
</dbReference>
<dbReference type="PANTHER" id="PTHR33515:SF1">
    <property type="entry name" value="RIBOSOME-BINDING FACTOR A, CHLOROPLASTIC-RELATED"/>
    <property type="match status" value="1"/>
</dbReference>
<dbReference type="Pfam" id="PF02033">
    <property type="entry name" value="RBFA"/>
    <property type="match status" value="1"/>
</dbReference>
<dbReference type="SUPFAM" id="SSF89919">
    <property type="entry name" value="Ribosome-binding factor A, RbfA"/>
    <property type="match status" value="1"/>
</dbReference>
<dbReference type="PROSITE" id="PS01319">
    <property type="entry name" value="RBFA"/>
    <property type="match status" value="1"/>
</dbReference>
<name>RBFA_BRADU</name>
<accession>Q89WB0</accession>